<feature type="chain" id="PRO_0000059641" description="UDP-3-O-acylglucosamine N-acyltransferase">
    <location>
        <begin position="1"/>
        <end position="355"/>
    </location>
</feature>
<feature type="active site" description="Proton acceptor" evidence="1">
    <location>
        <position position="258"/>
    </location>
</feature>
<dbReference type="EC" id="2.3.1.191" evidence="1"/>
<dbReference type="EMBL" id="AE007869">
    <property type="protein sequence ID" value="AAK87174.1"/>
    <property type="molecule type" value="Genomic_DNA"/>
</dbReference>
<dbReference type="PIR" id="AF2746">
    <property type="entry name" value="AF2746"/>
</dbReference>
<dbReference type="PIR" id="E97527">
    <property type="entry name" value="E97527"/>
</dbReference>
<dbReference type="RefSeq" id="NP_354389.1">
    <property type="nucleotide sequence ID" value="NC_003062.2"/>
</dbReference>
<dbReference type="RefSeq" id="WP_010971576.1">
    <property type="nucleotide sequence ID" value="NC_003062.2"/>
</dbReference>
<dbReference type="SMR" id="Q8UFL5"/>
<dbReference type="STRING" id="176299.Atu1382"/>
<dbReference type="EnsemblBacteria" id="AAK87174">
    <property type="protein sequence ID" value="AAK87174"/>
    <property type="gene ID" value="Atu1382"/>
</dbReference>
<dbReference type="GeneID" id="1133420"/>
<dbReference type="KEGG" id="atu:Atu1382"/>
<dbReference type="PATRIC" id="fig|176299.10.peg.1405"/>
<dbReference type="eggNOG" id="COG1044">
    <property type="taxonomic scope" value="Bacteria"/>
</dbReference>
<dbReference type="HOGENOM" id="CLU_049865_0_2_5"/>
<dbReference type="OrthoDB" id="9784739at2"/>
<dbReference type="PhylomeDB" id="Q8UFL5"/>
<dbReference type="BioCyc" id="AGRO:ATU1382-MONOMER"/>
<dbReference type="UniPathway" id="UPA00973"/>
<dbReference type="Proteomes" id="UP000000813">
    <property type="component" value="Chromosome circular"/>
</dbReference>
<dbReference type="GO" id="GO:0016020">
    <property type="term" value="C:membrane"/>
    <property type="evidence" value="ECO:0007669"/>
    <property type="project" value="GOC"/>
</dbReference>
<dbReference type="GO" id="GO:0016410">
    <property type="term" value="F:N-acyltransferase activity"/>
    <property type="evidence" value="ECO:0007669"/>
    <property type="project" value="InterPro"/>
</dbReference>
<dbReference type="GO" id="GO:0009245">
    <property type="term" value="P:lipid A biosynthetic process"/>
    <property type="evidence" value="ECO:0007669"/>
    <property type="project" value="UniProtKB-UniRule"/>
</dbReference>
<dbReference type="CDD" id="cd03352">
    <property type="entry name" value="LbH_LpxD"/>
    <property type="match status" value="1"/>
</dbReference>
<dbReference type="Gene3D" id="2.160.10.10">
    <property type="entry name" value="Hexapeptide repeat proteins"/>
    <property type="match status" value="1"/>
</dbReference>
<dbReference type="Gene3D" id="3.40.1390.10">
    <property type="entry name" value="MurE/MurF, N-terminal domain"/>
    <property type="match status" value="1"/>
</dbReference>
<dbReference type="HAMAP" id="MF_00523">
    <property type="entry name" value="LpxD"/>
    <property type="match status" value="1"/>
</dbReference>
<dbReference type="InterPro" id="IPR001451">
    <property type="entry name" value="Hexapep"/>
</dbReference>
<dbReference type="InterPro" id="IPR018357">
    <property type="entry name" value="Hexapep_transf_CS"/>
</dbReference>
<dbReference type="InterPro" id="IPR007691">
    <property type="entry name" value="LpxD"/>
</dbReference>
<dbReference type="InterPro" id="IPR011004">
    <property type="entry name" value="Trimer_LpxA-like_sf"/>
</dbReference>
<dbReference type="InterPro" id="IPR020573">
    <property type="entry name" value="UDP_GlcNAc_AcTrfase_non-rep"/>
</dbReference>
<dbReference type="NCBIfam" id="TIGR01853">
    <property type="entry name" value="lipid_A_lpxD"/>
    <property type="match status" value="1"/>
</dbReference>
<dbReference type="NCBIfam" id="NF002060">
    <property type="entry name" value="PRK00892.1"/>
    <property type="match status" value="1"/>
</dbReference>
<dbReference type="PANTHER" id="PTHR43378">
    <property type="entry name" value="UDP-3-O-ACYLGLUCOSAMINE N-ACYLTRANSFERASE"/>
    <property type="match status" value="1"/>
</dbReference>
<dbReference type="PANTHER" id="PTHR43378:SF2">
    <property type="entry name" value="UDP-3-O-ACYLGLUCOSAMINE N-ACYLTRANSFERASE 1, MITOCHONDRIAL-RELATED"/>
    <property type="match status" value="1"/>
</dbReference>
<dbReference type="Pfam" id="PF00132">
    <property type="entry name" value="Hexapep"/>
    <property type="match status" value="2"/>
</dbReference>
<dbReference type="Pfam" id="PF04613">
    <property type="entry name" value="LpxD"/>
    <property type="match status" value="1"/>
</dbReference>
<dbReference type="SUPFAM" id="SSF51161">
    <property type="entry name" value="Trimeric LpxA-like enzymes"/>
    <property type="match status" value="1"/>
</dbReference>
<dbReference type="PROSITE" id="PS00101">
    <property type="entry name" value="HEXAPEP_TRANSFERASES"/>
    <property type="match status" value="3"/>
</dbReference>
<protein>
    <recommendedName>
        <fullName evidence="1">UDP-3-O-acylglucosamine N-acyltransferase</fullName>
        <ecNumber evidence="1">2.3.1.191</ecNumber>
    </recommendedName>
</protein>
<evidence type="ECO:0000255" key="1">
    <source>
        <dbReference type="HAMAP-Rule" id="MF_00523"/>
    </source>
</evidence>
<keyword id="KW-0012">Acyltransferase</keyword>
<keyword id="KW-0441">Lipid A biosynthesis</keyword>
<keyword id="KW-0444">Lipid biosynthesis</keyword>
<keyword id="KW-0443">Lipid metabolism</keyword>
<keyword id="KW-1185">Reference proteome</keyword>
<keyword id="KW-0677">Repeat</keyword>
<keyword id="KW-0808">Transferase</keyword>
<reference key="1">
    <citation type="journal article" date="2001" name="Science">
        <title>The genome of the natural genetic engineer Agrobacterium tumefaciens C58.</title>
        <authorList>
            <person name="Wood D.W."/>
            <person name="Setubal J.C."/>
            <person name="Kaul R."/>
            <person name="Monks D.E."/>
            <person name="Kitajima J.P."/>
            <person name="Okura V.K."/>
            <person name="Zhou Y."/>
            <person name="Chen L."/>
            <person name="Wood G.E."/>
            <person name="Almeida N.F. Jr."/>
            <person name="Woo L."/>
            <person name="Chen Y."/>
            <person name="Paulsen I.T."/>
            <person name="Eisen J.A."/>
            <person name="Karp P.D."/>
            <person name="Bovee D. Sr."/>
            <person name="Chapman P."/>
            <person name="Clendenning J."/>
            <person name="Deatherage G."/>
            <person name="Gillet W."/>
            <person name="Grant C."/>
            <person name="Kutyavin T."/>
            <person name="Levy R."/>
            <person name="Li M.-J."/>
            <person name="McClelland E."/>
            <person name="Palmieri A."/>
            <person name="Raymond C."/>
            <person name="Rouse G."/>
            <person name="Saenphimmachak C."/>
            <person name="Wu Z."/>
            <person name="Romero P."/>
            <person name="Gordon D."/>
            <person name="Zhang S."/>
            <person name="Yoo H."/>
            <person name="Tao Y."/>
            <person name="Biddle P."/>
            <person name="Jung M."/>
            <person name="Krespan W."/>
            <person name="Perry M."/>
            <person name="Gordon-Kamm B."/>
            <person name="Liao L."/>
            <person name="Kim S."/>
            <person name="Hendrick C."/>
            <person name="Zhao Z.-Y."/>
            <person name="Dolan M."/>
            <person name="Chumley F."/>
            <person name="Tingey S.V."/>
            <person name="Tomb J.-F."/>
            <person name="Gordon M.P."/>
            <person name="Olson M.V."/>
            <person name="Nester E.W."/>
        </authorList>
    </citation>
    <scope>NUCLEOTIDE SEQUENCE [LARGE SCALE GENOMIC DNA]</scope>
    <source>
        <strain>C58 / ATCC 33970</strain>
    </source>
</reference>
<reference key="2">
    <citation type="journal article" date="2001" name="Science">
        <title>Genome sequence of the plant pathogen and biotechnology agent Agrobacterium tumefaciens C58.</title>
        <authorList>
            <person name="Goodner B."/>
            <person name="Hinkle G."/>
            <person name="Gattung S."/>
            <person name="Miller N."/>
            <person name="Blanchard M."/>
            <person name="Qurollo B."/>
            <person name="Goldman B.S."/>
            <person name="Cao Y."/>
            <person name="Askenazi M."/>
            <person name="Halling C."/>
            <person name="Mullin L."/>
            <person name="Houmiel K."/>
            <person name="Gordon J."/>
            <person name="Vaudin M."/>
            <person name="Iartchouk O."/>
            <person name="Epp A."/>
            <person name="Liu F."/>
            <person name="Wollam C."/>
            <person name="Allinger M."/>
            <person name="Doughty D."/>
            <person name="Scott C."/>
            <person name="Lappas C."/>
            <person name="Markelz B."/>
            <person name="Flanagan C."/>
            <person name="Crowell C."/>
            <person name="Gurson J."/>
            <person name="Lomo C."/>
            <person name="Sear C."/>
            <person name="Strub G."/>
            <person name="Cielo C."/>
            <person name="Slater S."/>
        </authorList>
    </citation>
    <scope>NUCLEOTIDE SEQUENCE [LARGE SCALE GENOMIC DNA]</scope>
    <source>
        <strain>C58 / ATCC 33970</strain>
    </source>
</reference>
<comment type="function">
    <text evidence="1">Catalyzes the N-acylation of UDP-3-O-acylglucosamine using 3-hydroxyacyl-ACP as the acyl donor. Is involved in the biosynthesis of lipid A, a phosphorylated glycolipid that anchors the lipopolysaccharide to the outer membrane of the cell.</text>
</comment>
<comment type="catalytic activity">
    <reaction evidence="1">
        <text>a UDP-3-O-[(3R)-3-hydroxyacyl]-alpha-D-glucosamine + a (3R)-hydroxyacyl-[ACP] = a UDP-2-N,3-O-bis[(3R)-3-hydroxyacyl]-alpha-D-glucosamine + holo-[ACP] + H(+)</text>
        <dbReference type="Rhea" id="RHEA:53836"/>
        <dbReference type="Rhea" id="RHEA-COMP:9685"/>
        <dbReference type="Rhea" id="RHEA-COMP:9945"/>
        <dbReference type="ChEBI" id="CHEBI:15378"/>
        <dbReference type="ChEBI" id="CHEBI:64479"/>
        <dbReference type="ChEBI" id="CHEBI:78827"/>
        <dbReference type="ChEBI" id="CHEBI:137740"/>
        <dbReference type="ChEBI" id="CHEBI:137748"/>
        <dbReference type="EC" id="2.3.1.191"/>
    </reaction>
</comment>
<comment type="pathway">
    <text evidence="1">Bacterial outer membrane biogenesis; LPS lipid A biosynthesis.</text>
</comment>
<comment type="subunit">
    <text evidence="1">Homotrimer.</text>
</comment>
<comment type="similarity">
    <text evidence="1">Belongs to the transferase hexapeptide repeat family. LpxD subfamily.</text>
</comment>
<organism>
    <name type="scientific">Agrobacterium fabrum (strain C58 / ATCC 33970)</name>
    <name type="common">Agrobacterium tumefaciens (strain C58)</name>
    <dbReference type="NCBI Taxonomy" id="176299"/>
    <lineage>
        <taxon>Bacteria</taxon>
        <taxon>Pseudomonadati</taxon>
        <taxon>Pseudomonadota</taxon>
        <taxon>Alphaproteobacteria</taxon>
        <taxon>Hyphomicrobiales</taxon>
        <taxon>Rhizobiaceae</taxon>
        <taxon>Rhizobium/Agrobacterium group</taxon>
        <taxon>Agrobacterium</taxon>
        <taxon>Agrobacterium tumefaciens complex</taxon>
    </lineage>
</organism>
<sequence length="355" mass="36885">MEYNAFFPPHEGLRLKDIADLFGAELSDDAAGERIIRSVAPVYRAKPDQLCYILSRKSGEELLTCEAGAVICDAALKSLIPSHIPALISKTPHTLFAQVGALLHPSAMRPSLVARMEAEISPAAYVDPSAKLEPGVIVEPMAVIGAGVHIGAGTRIGPGVVIGSDVQIGRDCTIAGGASILAALLGNNVIIHNGARIGQDGFGYAPGPRGMLKIVQIGRVIIQDHVEVGANTTIDRGTMDDTVIGEGTKIDNQVQIGHNVRIGRHCGIVSGVGIAGSTRIGDGVMIGGATGVNGHITIGDGVQIAAMSGVVSDVPAGTRYGGIPARPMKHFLRDMADILARAEERDKKTGEKNNG</sequence>
<name>LPXD_AGRFC</name>
<gene>
    <name evidence="1" type="primary">lpxD</name>
    <name type="ordered locus">Atu1382</name>
    <name type="ORF">AGR_C_2556</name>
</gene>
<proteinExistence type="inferred from homology"/>
<accession>Q8UFL5</accession>